<keyword id="KW-0326">Glycosidase</keyword>
<keyword id="KW-0378">Hydrolase</keyword>
<keyword id="KW-0456">Lyase</keyword>
<keyword id="KW-0464">Manganese</keyword>
<keyword id="KW-0479">Metal-binding</keyword>
<keyword id="KW-0614">Plasmid</keyword>
<dbReference type="EC" id="4.2.1.70" evidence="1"/>
<dbReference type="EMBL" id="AM236086">
    <property type="protein sequence ID" value="CAK11888.1"/>
    <property type="molecule type" value="Genomic_DNA"/>
</dbReference>
<dbReference type="SMR" id="Q1M4T3"/>
<dbReference type="EnsemblBacteria" id="CAK11888">
    <property type="protein sequence ID" value="CAK11888"/>
    <property type="gene ID" value="pRL120175"/>
</dbReference>
<dbReference type="KEGG" id="rle:pRL120175"/>
<dbReference type="eggNOG" id="COG2313">
    <property type="taxonomic scope" value="Bacteria"/>
</dbReference>
<dbReference type="HOGENOM" id="CLU_012201_0_1_5"/>
<dbReference type="Proteomes" id="UP000006575">
    <property type="component" value="Plasmid pRL12"/>
</dbReference>
<dbReference type="GO" id="GO:0005737">
    <property type="term" value="C:cytoplasm"/>
    <property type="evidence" value="ECO:0007669"/>
    <property type="project" value="TreeGrafter"/>
</dbReference>
<dbReference type="GO" id="GO:0016798">
    <property type="term" value="F:hydrolase activity, acting on glycosyl bonds"/>
    <property type="evidence" value="ECO:0007669"/>
    <property type="project" value="UniProtKB-KW"/>
</dbReference>
<dbReference type="GO" id="GO:0046872">
    <property type="term" value="F:metal ion binding"/>
    <property type="evidence" value="ECO:0007669"/>
    <property type="project" value="UniProtKB-KW"/>
</dbReference>
<dbReference type="GO" id="GO:0004730">
    <property type="term" value="F:pseudouridylate synthase activity"/>
    <property type="evidence" value="ECO:0007669"/>
    <property type="project" value="UniProtKB-UniRule"/>
</dbReference>
<dbReference type="GO" id="GO:0046113">
    <property type="term" value="P:nucleobase catabolic process"/>
    <property type="evidence" value="ECO:0007669"/>
    <property type="project" value="UniProtKB-UniRule"/>
</dbReference>
<dbReference type="Gene3D" id="3.40.1790.10">
    <property type="entry name" value="Indigoidine synthase domain"/>
    <property type="match status" value="1"/>
</dbReference>
<dbReference type="HAMAP" id="MF_01876">
    <property type="entry name" value="PsiMP_glycosidase"/>
    <property type="match status" value="1"/>
</dbReference>
<dbReference type="InterPro" id="IPR022830">
    <property type="entry name" value="Indigdn_synthA-like"/>
</dbReference>
<dbReference type="InterPro" id="IPR007342">
    <property type="entry name" value="PsuG"/>
</dbReference>
<dbReference type="PANTHER" id="PTHR42909:SF1">
    <property type="entry name" value="CARBOHYDRATE KINASE PFKB DOMAIN-CONTAINING PROTEIN"/>
    <property type="match status" value="1"/>
</dbReference>
<dbReference type="PANTHER" id="PTHR42909">
    <property type="entry name" value="ZGC:136858"/>
    <property type="match status" value="1"/>
</dbReference>
<dbReference type="Pfam" id="PF04227">
    <property type="entry name" value="Indigoidine_A"/>
    <property type="match status" value="1"/>
</dbReference>
<dbReference type="SUPFAM" id="SSF110581">
    <property type="entry name" value="Indigoidine synthase A-like"/>
    <property type="match status" value="1"/>
</dbReference>
<gene>
    <name evidence="1" type="primary">psuG2</name>
    <name type="ordered locus">pRL120175</name>
</gene>
<sequence length="309" mass="32889">MTLMKPRLSREMAEAIAAGSPVVALESTIITHGMPYPANLETALGVETVIRENGAIPATIAVVKGELRVGLEHDELEELAQSKGIVKASGRDLAVAMIRGQSAGTTVSATMLMADLAGIDVFATGGVGGVHRGAEQTFDISADLTELGRTKTAVVCAGVKSILDIAKTLEYLETQRVPVIAYGTEDFPAFFTRRSGFKADHRLDTPEEIAKAMWLHHQLGTGTGLLIANPIPEASALAPDFIDGTIADAVRDADERGIDRKELTPFLLARINELTKGESLKANIELVKNNARLAARIAVAYAPLKKARN</sequence>
<accession>Q1M4T3</accession>
<reference key="1">
    <citation type="journal article" date="2006" name="Genome Biol.">
        <title>The genome of Rhizobium leguminosarum has recognizable core and accessory components.</title>
        <authorList>
            <person name="Young J.P.W."/>
            <person name="Crossman L.C."/>
            <person name="Johnston A.W.B."/>
            <person name="Thomson N.R."/>
            <person name="Ghazoui Z.F."/>
            <person name="Hull K.H."/>
            <person name="Wexler M."/>
            <person name="Curson A.R.J."/>
            <person name="Todd J.D."/>
            <person name="Poole P.S."/>
            <person name="Mauchline T.H."/>
            <person name="East A.K."/>
            <person name="Quail M.A."/>
            <person name="Churcher C."/>
            <person name="Arrowsmith C."/>
            <person name="Cherevach I."/>
            <person name="Chillingworth T."/>
            <person name="Clarke K."/>
            <person name="Cronin A."/>
            <person name="Davis P."/>
            <person name="Fraser A."/>
            <person name="Hance Z."/>
            <person name="Hauser H."/>
            <person name="Jagels K."/>
            <person name="Moule S."/>
            <person name="Mungall K."/>
            <person name="Norbertczak H."/>
            <person name="Rabbinowitsch E."/>
            <person name="Sanders M."/>
            <person name="Simmonds M."/>
            <person name="Whitehead S."/>
            <person name="Parkhill J."/>
        </authorList>
    </citation>
    <scope>NUCLEOTIDE SEQUENCE [LARGE SCALE GENOMIC DNA]</scope>
    <source>
        <strain>DSM 114642 / LMG 32736 / 3841</strain>
    </source>
</reference>
<name>PSUG2_RHIJ3</name>
<geneLocation type="plasmid">
    <name>pRL12</name>
</geneLocation>
<feature type="chain" id="PRO_0000390539" description="Pseudouridine-5'-phosphate glycosidase 2">
    <location>
        <begin position="1"/>
        <end position="309"/>
    </location>
</feature>
<feature type="active site" description="Proton donor" evidence="1">
    <location>
        <position position="26"/>
    </location>
</feature>
<feature type="active site" description="Nucleophile" evidence="1">
    <location>
        <position position="160"/>
    </location>
</feature>
<feature type="binding site" evidence="1">
    <location>
        <position position="87"/>
    </location>
    <ligand>
        <name>substrate</name>
    </ligand>
</feature>
<feature type="binding site" evidence="1">
    <location>
        <position position="107"/>
    </location>
    <ligand>
        <name>substrate</name>
    </ligand>
</feature>
<feature type="binding site" evidence="1">
    <location>
        <position position="139"/>
    </location>
    <ligand>
        <name>Mn(2+)</name>
        <dbReference type="ChEBI" id="CHEBI:29035"/>
    </ligand>
</feature>
<feature type="binding site" evidence="1">
    <location>
        <begin position="141"/>
        <end position="143"/>
    </location>
    <ligand>
        <name>substrate</name>
    </ligand>
</feature>
<protein>
    <recommendedName>
        <fullName evidence="1">Pseudouridine-5'-phosphate glycosidase 2</fullName>
        <shortName evidence="1">PsiMP glycosidase 2</shortName>
        <ecNumber evidence="1">4.2.1.70</ecNumber>
    </recommendedName>
</protein>
<proteinExistence type="inferred from homology"/>
<evidence type="ECO:0000255" key="1">
    <source>
        <dbReference type="HAMAP-Rule" id="MF_01876"/>
    </source>
</evidence>
<comment type="function">
    <text evidence="1">Catalyzes the reversible cleavage of pseudouridine 5'-phosphate (PsiMP) to ribose 5-phosphate and uracil. Functions biologically in the cleavage direction, as part of a pseudouridine degradation pathway.</text>
</comment>
<comment type="catalytic activity">
    <reaction evidence="1">
        <text>D-ribose 5-phosphate + uracil = psi-UMP + H2O</text>
        <dbReference type="Rhea" id="RHEA:18337"/>
        <dbReference type="ChEBI" id="CHEBI:15377"/>
        <dbReference type="ChEBI" id="CHEBI:17568"/>
        <dbReference type="ChEBI" id="CHEBI:58380"/>
        <dbReference type="ChEBI" id="CHEBI:78346"/>
        <dbReference type="EC" id="4.2.1.70"/>
    </reaction>
</comment>
<comment type="cofactor">
    <cofactor evidence="1">
        <name>Mn(2+)</name>
        <dbReference type="ChEBI" id="CHEBI:29035"/>
    </cofactor>
    <text evidence="1">Binds 1 Mn(2+) ion per subunit.</text>
</comment>
<comment type="subunit">
    <text evidence="1">Homotrimer.</text>
</comment>
<comment type="similarity">
    <text evidence="1">Belongs to the pseudouridine-5'-phosphate glycosidase family.</text>
</comment>
<organism>
    <name type="scientific">Rhizobium johnstonii (strain DSM 114642 / LMG 32736 / 3841)</name>
    <name type="common">Rhizobium leguminosarum bv. viciae</name>
    <dbReference type="NCBI Taxonomy" id="216596"/>
    <lineage>
        <taxon>Bacteria</taxon>
        <taxon>Pseudomonadati</taxon>
        <taxon>Pseudomonadota</taxon>
        <taxon>Alphaproteobacteria</taxon>
        <taxon>Hyphomicrobiales</taxon>
        <taxon>Rhizobiaceae</taxon>
        <taxon>Rhizobium/Agrobacterium group</taxon>
        <taxon>Rhizobium</taxon>
        <taxon>Rhizobium johnstonii</taxon>
    </lineage>
</organism>